<dbReference type="EMBL" id="AE014075">
    <property type="protein sequence ID" value="AAN79459.1"/>
    <property type="status" value="ALT_INIT"/>
    <property type="molecule type" value="Genomic_DNA"/>
</dbReference>
<dbReference type="RefSeq" id="WP_000203025.1">
    <property type="nucleotide sequence ID" value="NZ_CP051263.1"/>
</dbReference>
<dbReference type="SMR" id="P0AAY7"/>
<dbReference type="STRING" id="199310.c0986"/>
<dbReference type="KEGG" id="ecc:c0986"/>
<dbReference type="eggNOG" id="ENOG502ZC96">
    <property type="taxonomic scope" value="Bacteria"/>
</dbReference>
<dbReference type="HOGENOM" id="CLU_115861_0_0_6"/>
<dbReference type="Proteomes" id="UP000001410">
    <property type="component" value="Chromosome"/>
</dbReference>
<dbReference type="CDD" id="cd17511">
    <property type="entry name" value="YbjN_AmyR-like"/>
    <property type="match status" value="1"/>
</dbReference>
<dbReference type="InterPro" id="IPR019660">
    <property type="entry name" value="Put_sensory_transdc_reg_YbjN"/>
</dbReference>
<dbReference type="Pfam" id="PF10722">
    <property type="entry name" value="YbjN"/>
    <property type="match status" value="1"/>
</dbReference>
<protein>
    <recommendedName>
        <fullName>Uncharacterized protein YbjN</fullName>
    </recommendedName>
</protein>
<feature type="chain" id="PRO_0000168745" description="Uncharacterized protein YbjN">
    <location>
        <begin position="1"/>
        <end position="158"/>
    </location>
</feature>
<reference key="1">
    <citation type="journal article" date="2002" name="Proc. Natl. Acad. Sci. U.S.A.">
        <title>Extensive mosaic structure revealed by the complete genome sequence of uropathogenic Escherichia coli.</title>
        <authorList>
            <person name="Welch R.A."/>
            <person name="Burland V."/>
            <person name="Plunkett G. III"/>
            <person name="Redford P."/>
            <person name="Roesch P."/>
            <person name="Rasko D."/>
            <person name="Buckles E.L."/>
            <person name="Liou S.-R."/>
            <person name="Boutin A."/>
            <person name="Hackett J."/>
            <person name="Stroud D."/>
            <person name="Mayhew G.F."/>
            <person name="Rose D.J."/>
            <person name="Zhou S."/>
            <person name="Schwartz D.C."/>
            <person name="Perna N.T."/>
            <person name="Mobley H.L.T."/>
            <person name="Donnenberg M.S."/>
            <person name="Blattner F.R."/>
        </authorList>
    </citation>
    <scope>NUCLEOTIDE SEQUENCE [LARGE SCALE GENOMIC DNA]</scope>
    <source>
        <strain>CFT073 / ATCC 700928 / UPEC</strain>
    </source>
</reference>
<name>YBJN_ECOL6</name>
<evidence type="ECO:0000305" key="1"/>
<sequence>MTSLVVPGLDTLRQWLDDLGMSFFECDNCQALHLPHMQNFDGVFDAKIDLIDNTILFSAMAEVRPSAVLPLAADLSAINASSLTVKAFLDMQDDNLPKLVVCQSLSVMQGVTYEQFAWFVRQSEEQISMVILEANAHQLLLPTDDEGQNNVTENYFLH</sequence>
<keyword id="KW-1185">Reference proteome</keyword>
<organism>
    <name type="scientific">Escherichia coli O6:H1 (strain CFT073 / ATCC 700928 / UPEC)</name>
    <dbReference type="NCBI Taxonomy" id="199310"/>
    <lineage>
        <taxon>Bacteria</taxon>
        <taxon>Pseudomonadati</taxon>
        <taxon>Pseudomonadota</taxon>
        <taxon>Gammaproteobacteria</taxon>
        <taxon>Enterobacterales</taxon>
        <taxon>Enterobacteriaceae</taxon>
        <taxon>Escherichia</taxon>
    </lineage>
</organism>
<comment type="sequence caution" evidence="1">
    <conflict type="erroneous initiation">
        <sequence resource="EMBL-CDS" id="AAN79459"/>
    </conflict>
</comment>
<proteinExistence type="predicted"/>
<gene>
    <name type="primary">ybjN</name>
    <name type="ordered locus">c0986</name>
</gene>
<accession>P0AAY7</accession>
<accession>P75815</accession>